<accession>B2V110</accession>
<proteinExistence type="inferred from homology"/>
<gene>
    <name type="ordered locus">CLH_3298</name>
</gene>
<organism>
    <name type="scientific">Clostridium botulinum (strain Alaska E43 / Type E3)</name>
    <dbReference type="NCBI Taxonomy" id="508767"/>
    <lineage>
        <taxon>Bacteria</taxon>
        <taxon>Bacillati</taxon>
        <taxon>Bacillota</taxon>
        <taxon>Clostridia</taxon>
        <taxon>Eubacteriales</taxon>
        <taxon>Clostridiaceae</taxon>
        <taxon>Clostridium</taxon>
    </lineage>
</organism>
<comment type="function">
    <text evidence="1">Bifunctional serine/threonine kinase and phosphorylase involved in the regulation of the pyruvate, phosphate dikinase (PPDK) by catalyzing its phosphorylation/dephosphorylation.</text>
</comment>
<comment type="catalytic activity">
    <reaction evidence="1">
        <text>N(tele)-phospho-L-histidyl/L-threonyl-[pyruvate, phosphate dikinase] + ADP = N(tele)-phospho-L-histidyl/O-phospho-L-threonyl-[pyruvate, phosphate dikinase] + AMP + H(+)</text>
        <dbReference type="Rhea" id="RHEA:43692"/>
        <dbReference type="Rhea" id="RHEA-COMP:10650"/>
        <dbReference type="Rhea" id="RHEA-COMP:10651"/>
        <dbReference type="ChEBI" id="CHEBI:15378"/>
        <dbReference type="ChEBI" id="CHEBI:30013"/>
        <dbReference type="ChEBI" id="CHEBI:61977"/>
        <dbReference type="ChEBI" id="CHEBI:83586"/>
        <dbReference type="ChEBI" id="CHEBI:456215"/>
        <dbReference type="ChEBI" id="CHEBI:456216"/>
        <dbReference type="EC" id="2.7.11.32"/>
    </reaction>
</comment>
<comment type="catalytic activity">
    <reaction evidence="1">
        <text>N(tele)-phospho-L-histidyl/O-phospho-L-threonyl-[pyruvate, phosphate dikinase] + phosphate + H(+) = N(tele)-phospho-L-histidyl/L-threonyl-[pyruvate, phosphate dikinase] + diphosphate</text>
        <dbReference type="Rhea" id="RHEA:43696"/>
        <dbReference type="Rhea" id="RHEA-COMP:10650"/>
        <dbReference type="Rhea" id="RHEA-COMP:10651"/>
        <dbReference type="ChEBI" id="CHEBI:15378"/>
        <dbReference type="ChEBI" id="CHEBI:30013"/>
        <dbReference type="ChEBI" id="CHEBI:33019"/>
        <dbReference type="ChEBI" id="CHEBI:43474"/>
        <dbReference type="ChEBI" id="CHEBI:61977"/>
        <dbReference type="ChEBI" id="CHEBI:83586"/>
        <dbReference type="EC" id="2.7.4.27"/>
    </reaction>
</comment>
<comment type="similarity">
    <text evidence="1">Belongs to the pyruvate, phosphate/water dikinase regulatory protein family. PDRP subfamily.</text>
</comment>
<name>PDRP_CLOBA</name>
<dbReference type="EC" id="2.7.11.32" evidence="1"/>
<dbReference type="EC" id="2.7.4.27" evidence="1"/>
<dbReference type="EMBL" id="CP001078">
    <property type="protein sequence ID" value="ACD51963.1"/>
    <property type="molecule type" value="Genomic_DNA"/>
</dbReference>
<dbReference type="RefSeq" id="WP_012450209.1">
    <property type="nucleotide sequence ID" value="NC_010723.1"/>
</dbReference>
<dbReference type="SMR" id="B2V110"/>
<dbReference type="KEGG" id="cbt:CLH_3298"/>
<dbReference type="HOGENOM" id="CLU_046206_2_1_9"/>
<dbReference type="GO" id="GO:0043531">
    <property type="term" value="F:ADP binding"/>
    <property type="evidence" value="ECO:0007669"/>
    <property type="project" value="UniProtKB-UniRule"/>
</dbReference>
<dbReference type="GO" id="GO:0005524">
    <property type="term" value="F:ATP binding"/>
    <property type="evidence" value="ECO:0007669"/>
    <property type="project" value="InterPro"/>
</dbReference>
<dbReference type="GO" id="GO:0016776">
    <property type="term" value="F:phosphotransferase activity, phosphate group as acceptor"/>
    <property type="evidence" value="ECO:0007669"/>
    <property type="project" value="UniProtKB-UniRule"/>
</dbReference>
<dbReference type="GO" id="GO:0004674">
    <property type="term" value="F:protein serine/threonine kinase activity"/>
    <property type="evidence" value="ECO:0007669"/>
    <property type="project" value="UniProtKB-UniRule"/>
</dbReference>
<dbReference type="HAMAP" id="MF_00921">
    <property type="entry name" value="PDRP"/>
    <property type="match status" value="1"/>
</dbReference>
<dbReference type="InterPro" id="IPR005177">
    <property type="entry name" value="Kinase-pyrophosphorylase"/>
</dbReference>
<dbReference type="InterPro" id="IPR026565">
    <property type="entry name" value="PPDK_reg"/>
</dbReference>
<dbReference type="NCBIfam" id="NF003742">
    <property type="entry name" value="PRK05339.1"/>
    <property type="match status" value="1"/>
</dbReference>
<dbReference type="PANTHER" id="PTHR31756">
    <property type="entry name" value="PYRUVATE, PHOSPHATE DIKINASE REGULATORY PROTEIN 1, CHLOROPLASTIC"/>
    <property type="match status" value="1"/>
</dbReference>
<dbReference type="PANTHER" id="PTHR31756:SF3">
    <property type="entry name" value="PYRUVATE, PHOSPHATE DIKINASE REGULATORY PROTEIN 1, CHLOROPLASTIC"/>
    <property type="match status" value="1"/>
</dbReference>
<dbReference type="Pfam" id="PF03618">
    <property type="entry name" value="Kinase-PPPase"/>
    <property type="match status" value="1"/>
</dbReference>
<evidence type="ECO:0000255" key="1">
    <source>
        <dbReference type="HAMAP-Rule" id="MF_00921"/>
    </source>
</evidence>
<protein>
    <recommendedName>
        <fullName evidence="1">Putative pyruvate, phosphate dikinase regulatory protein</fullName>
        <shortName evidence="1">PPDK regulatory protein</shortName>
        <ecNumber evidence="1">2.7.11.32</ecNumber>
        <ecNumber evidence="1">2.7.4.27</ecNumber>
    </recommendedName>
</protein>
<sequence length="272" mass="31211">MLTIFAISDSIAETAHQVTLAVAAQFKEKIKIRRVPYIKTIDDVDCIFPEIAKIERKIIISTIITVDVREYLTKKCYEKNIYIMNVLGPLIDSISSMLNTNPEYKPGAMRQIDEIYYKRIEAMEFAMQYDDSKDYGGLKNADVVLIGLSRTSKTPLSMYLANKGVKAINIPLMPEIGVPDEIYTIDKKKIFGLKIDAFQLIEIRKKRLDKFHRISSSIEYAGDERILEELEYSDRIMKRLGCKTIDITQRAIEDTALIILESIGYNKNTNIY</sequence>
<feature type="chain" id="PRO_1000136461" description="Putative pyruvate, phosphate dikinase regulatory protein">
    <location>
        <begin position="1"/>
        <end position="272"/>
    </location>
</feature>
<feature type="binding site" evidence="1">
    <location>
        <begin position="147"/>
        <end position="154"/>
    </location>
    <ligand>
        <name>ADP</name>
        <dbReference type="ChEBI" id="CHEBI:456216"/>
    </ligand>
</feature>
<keyword id="KW-0418">Kinase</keyword>
<keyword id="KW-0547">Nucleotide-binding</keyword>
<keyword id="KW-0723">Serine/threonine-protein kinase</keyword>
<keyword id="KW-0808">Transferase</keyword>
<reference key="1">
    <citation type="submission" date="2008-05" db="EMBL/GenBank/DDBJ databases">
        <title>Complete genome sequence of Clostridium botulinum E3 str. Alaska E43.</title>
        <authorList>
            <person name="Brinkac L.M."/>
            <person name="Brown J.L."/>
            <person name="Bruce D."/>
            <person name="Detter C."/>
            <person name="Munk C."/>
            <person name="Smith L.A."/>
            <person name="Smith T.J."/>
            <person name="Sutton G."/>
            <person name="Brettin T.S."/>
        </authorList>
    </citation>
    <scope>NUCLEOTIDE SEQUENCE [LARGE SCALE GENOMIC DNA]</scope>
    <source>
        <strain>Alaska E43 / Type E3</strain>
    </source>
</reference>